<gene>
    <name type="primary">HSD3B1</name>
</gene>
<protein>
    <recommendedName>
        <fullName>3 beta-hydroxysteroid dehydrogenase/Delta 5--&gt;4-isomerase type 1</fullName>
    </recommendedName>
    <alternativeName>
        <fullName evidence="1">3 beta-hydroxysteroid dehydrogenase/Delta 5--&gt;4-isomerase type I</fullName>
        <shortName>3-beta-HSD I</shortName>
    </alternativeName>
    <alternativeName>
        <fullName evidence="1">3-beta-hydroxy-5-ene steroid dehydrogenase</fullName>
    </alternativeName>
    <alternativeName>
        <fullName evidence="1">3-beta-hydroxy-Delta(5)-steroid dehydrogenase</fullName>
        <ecNumber evidence="2">1.1.1.145</ecNumber>
    </alternativeName>
    <alternativeName>
        <fullName evidence="1">3-beta-hydroxysteroid 3-dehydrogenase</fullName>
        <ecNumber evidence="2">1.1.1.270</ecNumber>
    </alternativeName>
    <alternativeName>
        <fullName>Delta-5-3-ketosteroid isomerase</fullName>
    </alternativeName>
    <alternativeName>
        <fullName evidence="1">Dihydrotestosterone oxidoreductase</fullName>
        <ecNumber evidence="2">1.1.1.210</ecNumber>
    </alternativeName>
    <alternativeName>
        <fullName evidence="1">Steroid Delta-isomerase</fullName>
        <ecNumber evidence="2">5.3.3.1</ecNumber>
    </alternativeName>
</protein>
<sequence length="373" mass="42005">MTGWSCLVTGAGGFLGQRIVRLLVEEKELKEIRVLDKAFRPELREEFSKLQNKTKLTVLEGDILDEPFLKRACQDVSVVIHTACIIDVFGVTHRESIMNVNVKGTQLLLEACVQASVPVFIYTSTLEVAGPNSYKEIIQNGHEEEPLENTWPAPYPYSKKLAEKAVLAANGWTLKNGGTLYTCALRPMYIYGEGGPFLSASINEALNNNGILSSVGKFSTVNPVYVGNVAWAHILALRALRDPKKAPSVQGQFYYISDDTPHQSYDNLNYILSKEFGLCLDSRWSLPLALMYWIGFLLEVVSFLLSPVYSYQPPFNRHTVTLSNSVFTFSYKKAQRDLAYKPLYSWEEAKQKTVEWVGSLVDRHKETLKSKTQ</sequence>
<feature type="chain" id="PRO_0000087776" description="3 beta-hydroxysteroid dehydrogenase/Delta 5--&gt;4-isomerase type 1">
    <location>
        <begin position="1"/>
        <end position="373"/>
    </location>
</feature>
<feature type="transmembrane region" description="Helical" evidence="4">
    <location>
        <begin position="288"/>
        <end position="308"/>
    </location>
</feature>
<feature type="active site" description="Proton donor" evidence="3">
    <location>
        <position position="159"/>
    </location>
</feature>
<feature type="binding site" evidence="3">
    <location>
        <begin position="10"/>
        <end position="15"/>
    </location>
    <ligand>
        <name>NADP(+)</name>
        <dbReference type="ChEBI" id="CHEBI:58349"/>
    </ligand>
</feature>
<feature type="binding site" evidence="3">
    <location>
        <position position="155"/>
    </location>
    <ligand>
        <name>NADP(+)</name>
        <dbReference type="ChEBI" id="CHEBI:58349"/>
    </ligand>
</feature>
<feature type="binding site" evidence="3">
    <location>
        <position position="159"/>
    </location>
    <ligand>
        <name>NADP(+)</name>
        <dbReference type="ChEBI" id="CHEBI:58349"/>
    </ligand>
</feature>
<proteinExistence type="evidence at transcript level"/>
<organism>
    <name type="scientific">Macaca mulatta</name>
    <name type="common">Rhesus macaque</name>
    <dbReference type="NCBI Taxonomy" id="9544"/>
    <lineage>
        <taxon>Eukaryota</taxon>
        <taxon>Metazoa</taxon>
        <taxon>Chordata</taxon>
        <taxon>Craniata</taxon>
        <taxon>Vertebrata</taxon>
        <taxon>Euteleostomi</taxon>
        <taxon>Mammalia</taxon>
        <taxon>Eutheria</taxon>
        <taxon>Euarchontoglires</taxon>
        <taxon>Primates</taxon>
        <taxon>Haplorrhini</taxon>
        <taxon>Catarrhini</taxon>
        <taxon>Cercopithecidae</taxon>
        <taxon>Cercopithecinae</taxon>
        <taxon>Macaca</taxon>
    </lineage>
</organism>
<reference key="1">
    <citation type="journal article" date="1991" name="Mol. Cell. Endocrinol.">
        <title>Characterization of macaque 3 beta-hydroxy-5-ene steroid dehydrogenase/delta 5-delta 4 isomerase: structure and expression in steroidogenic and peripheral tissues in primate.</title>
        <authorList>
            <person name="Simard J."/>
            <person name="Melner M.H."/>
            <person name="Breton N."/>
            <person name="Low K.G."/>
            <person name="Zhao H.-F."/>
            <person name="Periman L.M."/>
            <person name="Labrie F."/>
        </authorList>
    </citation>
    <scope>NUCLEOTIDE SEQUENCE [MRNA]</scope>
    <source>
        <tissue>Ovary</tissue>
    </source>
</reference>
<comment type="function">
    <text evidence="1 2">A bifunctional enzyme responsible for the oxidation and isomerization of 3beta-hydroxy-Delta(5)-steroid precursors to 3-oxo-Delta(4)-steroids, an essential step in steroid hormone biosynthesis. Specifically catalyzes the conversion of pregnenolone to progesterone, 17alpha-hydroxypregnenolone to 17alpha-hydroxyprogesterone, dehydroepiandrosterone (DHEA) to 4-androstenedione and androstenediol to testosterone. Additionally, catalyzes the interconversion between 3beta-hydroxy and 3-oxo-5alpha-androstane steroids controlling the bioavalability of the active forms. Specifically converts dihydrotestosterone to its inactive form 5alpha-androstanediol, that does not bind androgen receptor/AR. Also converts androstanedione, a precursor of testosterone and estrone, to epiandrosterone. Expected to use NAD(+) as preferred electron donor for the 3beta-hydroxy-steroid dehydrogenase activity and NADPH for the 3-ketosteroid reductase activity.</text>
</comment>
<comment type="catalytic activity">
    <reaction evidence="2">
        <text>a 3beta-hydroxy-Delta(5)-steroid + NAD(+) = a 3-oxo-Delta(5)-steroid + NADH + H(+)</text>
        <dbReference type="Rhea" id="RHEA:24076"/>
        <dbReference type="ChEBI" id="CHEBI:1722"/>
        <dbReference type="ChEBI" id="CHEBI:15378"/>
        <dbReference type="ChEBI" id="CHEBI:47907"/>
        <dbReference type="ChEBI" id="CHEBI:57540"/>
        <dbReference type="ChEBI" id="CHEBI:57945"/>
        <dbReference type="EC" id="1.1.1.145"/>
    </reaction>
</comment>
<comment type="catalytic activity">
    <reaction evidence="2">
        <text>pregnenolone + NAD(+) = pregn-5-ene-3,20-dione + NADH + H(+)</text>
        <dbReference type="Rhea" id="RHEA:43924"/>
        <dbReference type="ChEBI" id="CHEBI:15378"/>
        <dbReference type="ChEBI" id="CHEBI:16581"/>
        <dbReference type="ChEBI" id="CHEBI:57540"/>
        <dbReference type="ChEBI" id="CHEBI:57945"/>
        <dbReference type="ChEBI" id="CHEBI:63837"/>
    </reaction>
</comment>
<comment type="catalytic activity">
    <reaction evidence="2">
        <text>3beta-hydroxyandrost-5-en-17-one + NAD(+) = androst-5-ene-3,17-dione + NADH + H(+)</text>
        <dbReference type="Rhea" id="RHEA:43932"/>
        <dbReference type="ChEBI" id="CHEBI:15378"/>
        <dbReference type="ChEBI" id="CHEBI:28689"/>
        <dbReference type="ChEBI" id="CHEBI:57540"/>
        <dbReference type="ChEBI" id="CHEBI:57945"/>
        <dbReference type="ChEBI" id="CHEBI:83865"/>
        <dbReference type="EC" id="1.1.1.145"/>
    </reaction>
</comment>
<comment type="catalytic activity">
    <reaction evidence="2">
        <text>androst-5-en-3beta,17beta-diol + NAD(+) = 17beta-hydroxy-androst-5-en-3-one + NADH + H(+)</text>
        <dbReference type="Rhea" id="RHEA:56932"/>
        <dbReference type="ChEBI" id="CHEBI:2710"/>
        <dbReference type="ChEBI" id="CHEBI:15378"/>
        <dbReference type="ChEBI" id="CHEBI:57540"/>
        <dbReference type="ChEBI" id="CHEBI:57945"/>
        <dbReference type="ChEBI" id="CHEBI:141179"/>
    </reaction>
</comment>
<comment type="catalytic activity">
    <reaction evidence="2">
        <text>a 3beta-hydroxysteroid + NADP(+) = a 3-oxosteroid + NADPH + H(+)</text>
        <dbReference type="Rhea" id="RHEA:34787"/>
        <dbReference type="ChEBI" id="CHEBI:15378"/>
        <dbReference type="ChEBI" id="CHEBI:36836"/>
        <dbReference type="ChEBI" id="CHEBI:47788"/>
        <dbReference type="ChEBI" id="CHEBI:57783"/>
        <dbReference type="ChEBI" id="CHEBI:58349"/>
        <dbReference type="EC" id="1.1.1.270"/>
    </reaction>
</comment>
<comment type="catalytic activity">
    <reaction evidence="2">
        <text>5alpha-androstane-3beta,17beta-diol + NADP(+) = 17beta-hydroxy-5alpha-androstan-3-one + NADPH + H(+)</text>
        <dbReference type="Rhea" id="RHEA:16297"/>
        <dbReference type="ChEBI" id="CHEBI:15378"/>
        <dbReference type="ChEBI" id="CHEBI:16330"/>
        <dbReference type="ChEBI" id="CHEBI:18329"/>
        <dbReference type="ChEBI" id="CHEBI:57783"/>
        <dbReference type="ChEBI" id="CHEBI:58349"/>
        <dbReference type="EC" id="1.1.1.210"/>
    </reaction>
</comment>
<comment type="catalytic activity">
    <reaction evidence="2">
        <text>3beta-hydroxy-5alpha-androstan-17-one + NADP(+) = 5alpha-androstan-3,17-dione + NADPH + H(+)</text>
        <dbReference type="Rhea" id="RHEA:56916"/>
        <dbReference type="ChEBI" id="CHEBI:15378"/>
        <dbReference type="ChEBI" id="CHEBI:15994"/>
        <dbReference type="ChEBI" id="CHEBI:57783"/>
        <dbReference type="ChEBI" id="CHEBI:58349"/>
        <dbReference type="ChEBI" id="CHEBI:541975"/>
    </reaction>
</comment>
<comment type="catalytic activity">
    <reaction evidence="2">
        <text>a 3-oxo-Delta(5)-steroid = a 3-oxo-Delta(4)-steroid</text>
        <dbReference type="Rhea" id="RHEA:14709"/>
        <dbReference type="ChEBI" id="CHEBI:47907"/>
        <dbReference type="ChEBI" id="CHEBI:47909"/>
        <dbReference type="EC" id="5.3.3.1"/>
    </reaction>
</comment>
<comment type="catalytic activity">
    <reaction evidence="2">
        <text>pregn-5-ene-3,20-dione = progesterone</text>
        <dbReference type="Rhea" id="RHEA:43928"/>
        <dbReference type="ChEBI" id="CHEBI:17026"/>
        <dbReference type="ChEBI" id="CHEBI:63837"/>
    </reaction>
</comment>
<comment type="catalytic activity">
    <reaction evidence="2">
        <text>androst-5-ene-3,17-dione = androst-4-ene-3,17-dione</text>
        <dbReference type="Rhea" id="RHEA:43936"/>
        <dbReference type="ChEBI" id="CHEBI:16422"/>
        <dbReference type="ChEBI" id="CHEBI:83865"/>
    </reaction>
</comment>
<comment type="catalytic activity">
    <reaction evidence="2">
        <text>17beta-hydroxy-androst-5-en-3-one = testosterone</text>
        <dbReference type="Rhea" id="RHEA:56936"/>
        <dbReference type="ChEBI" id="CHEBI:17347"/>
        <dbReference type="ChEBI" id="CHEBI:141179"/>
    </reaction>
</comment>
<comment type="catalytic activity">
    <reaction evidence="1">
        <text>5alpha-androstane-3beta,17beta-diol + NAD(+) = 17beta-hydroxy-5alpha-androstan-3-one + NADH + H(+)</text>
        <dbReference type="Rhea" id="RHEA:42184"/>
        <dbReference type="ChEBI" id="CHEBI:15378"/>
        <dbReference type="ChEBI" id="CHEBI:16330"/>
        <dbReference type="ChEBI" id="CHEBI:18329"/>
        <dbReference type="ChEBI" id="CHEBI:57540"/>
        <dbReference type="ChEBI" id="CHEBI:57945"/>
    </reaction>
</comment>
<comment type="pathway">
    <text evidence="2">Steroid hormone biosynthesis.</text>
</comment>
<comment type="pathway">
    <text evidence="2">Steroid metabolism.</text>
</comment>
<comment type="subcellular location">
    <subcellularLocation>
        <location>Endoplasmic reticulum membrane</location>
        <topology>Single-pass membrane protein</topology>
    </subcellularLocation>
    <subcellularLocation>
        <location>Mitochondrion membrane</location>
        <topology>Single-pass membrane protein</topology>
    </subcellularLocation>
</comment>
<comment type="tissue specificity">
    <text>Adrenal glands, testes and ovaries.</text>
</comment>
<comment type="similarity">
    <text evidence="5">Belongs to the 3-beta-HSD family.</text>
</comment>
<accession>P27365</accession>
<evidence type="ECO:0000250" key="1">
    <source>
        <dbReference type="UniProtKB" id="P14060"/>
    </source>
</evidence>
<evidence type="ECO:0000250" key="2">
    <source>
        <dbReference type="UniProtKB" id="P22071"/>
    </source>
</evidence>
<evidence type="ECO:0000250" key="3">
    <source>
        <dbReference type="UniProtKB" id="Q12068"/>
    </source>
</evidence>
<evidence type="ECO:0000255" key="4"/>
<evidence type="ECO:0000305" key="5"/>
<name>3BHS1_MACMU</name>
<keyword id="KW-0256">Endoplasmic reticulum</keyword>
<keyword id="KW-0413">Isomerase</keyword>
<keyword id="KW-0443">Lipid metabolism</keyword>
<keyword id="KW-0472">Membrane</keyword>
<keyword id="KW-0496">Mitochondrion</keyword>
<keyword id="KW-0511">Multifunctional enzyme</keyword>
<keyword id="KW-0520">NAD</keyword>
<keyword id="KW-0521">NADP</keyword>
<keyword id="KW-0560">Oxidoreductase</keyword>
<keyword id="KW-1185">Reference proteome</keyword>
<keyword id="KW-0753">Steroid metabolism</keyword>
<keyword id="KW-0755">Steroidogenesis</keyword>
<keyword id="KW-0812">Transmembrane</keyword>
<keyword id="KW-1133">Transmembrane helix</keyword>
<dbReference type="EC" id="1.1.1.145" evidence="2"/>
<dbReference type="EC" id="1.1.1.270" evidence="2"/>
<dbReference type="EC" id="1.1.1.210" evidence="2"/>
<dbReference type="EC" id="5.3.3.1" evidence="2"/>
<dbReference type="EMBL" id="M67467">
    <property type="protein sequence ID" value="AAA36847.1"/>
    <property type="molecule type" value="mRNA"/>
</dbReference>
<dbReference type="PIR" id="A54325">
    <property type="entry name" value="A54325"/>
</dbReference>
<dbReference type="SMR" id="P27365"/>
<dbReference type="FunCoup" id="P27365">
    <property type="interactions" value="82"/>
</dbReference>
<dbReference type="STRING" id="9544.ENSMMUP00000077828"/>
<dbReference type="PaxDb" id="9544-ENSMMUP00000021766"/>
<dbReference type="Ensembl" id="ENSMMUT00000023265.4">
    <property type="protein sequence ID" value="ENSMMUP00000021766.4"/>
    <property type="gene ID" value="ENSMMUG00000016568.4"/>
</dbReference>
<dbReference type="VEuPathDB" id="HostDB:ENSMMUG00000016568"/>
<dbReference type="VGNC" id="VGNC:99971">
    <property type="gene designation" value="HSD3B2"/>
</dbReference>
<dbReference type="eggNOG" id="KOG1430">
    <property type="taxonomic scope" value="Eukaryota"/>
</dbReference>
<dbReference type="GeneTree" id="ENSGT00940000161374"/>
<dbReference type="HOGENOM" id="CLU_007383_6_3_1"/>
<dbReference type="InParanoid" id="P27365"/>
<dbReference type="OMA" id="GGKFYFV"/>
<dbReference type="OrthoDB" id="1925334at2759"/>
<dbReference type="Proteomes" id="UP000006718">
    <property type="component" value="Chromosome 1"/>
</dbReference>
<dbReference type="Bgee" id="ENSMMUG00000016568">
    <property type="expression patterns" value="Expressed in ileum and 9 other cell types or tissues"/>
</dbReference>
<dbReference type="ExpressionAtlas" id="P27365">
    <property type="expression patterns" value="baseline"/>
</dbReference>
<dbReference type="GO" id="GO:0005737">
    <property type="term" value="C:cytoplasm"/>
    <property type="evidence" value="ECO:0000318"/>
    <property type="project" value="GO_Central"/>
</dbReference>
<dbReference type="GO" id="GO:0005789">
    <property type="term" value="C:endoplasmic reticulum membrane"/>
    <property type="evidence" value="ECO:0007669"/>
    <property type="project" value="UniProtKB-SubCell"/>
</dbReference>
<dbReference type="GO" id="GO:0043231">
    <property type="term" value="C:intracellular membrane-bounded organelle"/>
    <property type="evidence" value="ECO:0000318"/>
    <property type="project" value="GO_Central"/>
</dbReference>
<dbReference type="GO" id="GO:0031966">
    <property type="term" value="C:mitochondrial membrane"/>
    <property type="evidence" value="ECO:0007669"/>
    <property type="project" value="UniProtKB-SubCell"/>
</dbReference>
<dbReference type="GO" id="GO:0003854">
    <property type="term" value="F:3-beta-hydroxy-Delta5-steroid dehydrogenase (NAD+) activity"/>
    <property type="evidence" value="ECO:0007669"/>
    <property type="project" value="UniProtKB-EC"/>
</dbReference>
<dbReference type="GO" id="GO:0000253">
    <property type="term" value="F:3-beta-hydroxysteroid 3-dehydrogenase (NADP+) activity"/>
    <property type="evidence" value="ECO:0007669"/>
    <property type="project" value="UniProtKB-EC"/>
</dbReference>
<dbReference type="GO" id="GO:0047024">
    <property type="term" value="F:5-alpha-androstane-3-beta,17-beta-diol dehydrogenase (NADP+) activity"/>
    <property type="evidence" value="ECO:0007669"/>
    <property type="project" value="UniProtKB-EC"/>
</dbReference>
<dbReference type="GO" id="GO:0016616">
    <property type="term" value="F:oxidoreductase activity, acting on the CH-OH group of donors, NAD or NADP as acceptor"/>
    <property type="evidence" value="ECO:0000318"/>
    <property type="project" value="GO_Central"/>
</dbReference>
<dbReference type="GO" id="GO:0004769">
    <property type="term" value="F:steroid Delta-isomerase activity"/>
    <property type="evidence" value="ECO:0007669"/>
    <property type="project" value="UniProtKB-EC"/>
</dbReference>
<dbReference type="GO" id="GO:0008207">
    <property type="term" value="P:C21-steroid hormone metabolic process"/>
    <property type="evidence" value="ECO:0000318"/>
    <property type="project" value="GO_Central"/>
</dbReference>
<dbReference type="GO" id="GO:0006694">
    <property type="term" value="P:steroid biosynthetic process"/>
    <property type="evidence" value="ECO:0000318"/>
    <property type="project" value="GO_Central"/>
</dbReference>
<dbReference type="CDD" id="cd09811">
    <property type="entry name" value="3b-HSD_HSDB1_like_SDR_e"/>
    <property type="match status" value="1"/>
</dbReference>
<dbReference type="FunFam" id="3.40.50.720:FF:000220">
    <property type="entry name" value="3 beta-hydroxysteroid dehydrogenase/Delta 5--&gt;4-isomerase type 1"/>
    <property type="match status" value="1"/>
</dbReference>
<dbReference type="Gene3D" id="3.40.50.720">
    <property type="entry name" value="NAD(P)-binding Rossmann-like Domain"/>
    <property type="match status" value="1"/>
</dbReference>
<dbReference type="InterPro" id="IPR002225">
    <property type="entry name" value="3Beta_OHSteriod_DH/Estase"/>
</dbReference>
<dbReference type="InterPro" id="IPR050177">
    <property type="entry name" value="Lipid_A_modif_metabolic_enz"/>
</dbReference>
<dbReference type="InterPro" id="IPR036291">
    <property type="entry name" value="NAD(P)-bd_dom_sf"/>
</dbReference>
<dbReference type="PANTHER" id="PTHR43245">
    <property type="entry name" value="BIFUNCTIONAL POLYMYXIN RESISTANCE PROTEIN ARNA"/>
    <property type="match status" value="1"/>
</dbReference>
<dbReference type="PANTHER" id="PTHR43245:SF51">
    <property type="entry name" value="SHORT CHAIN DEHYDROGENASE_REDUCTASE FAMILY 42E, MEMBER 2"/>
    <property type="match status" value="1"/>
</dbReference>
<dbReference type="Pfam" id="PF01073">
    <property type="entry name" value="3Beta_HSD"/>
    <property type="match status" value="1"/>
</dbReference>
<dbReference type="SUPFAM" id="SSF51735">
    <property type="entry name" value="NAD(P)-binding Rossmann-fold domains"/>
    <property type="match status" value="1"/>
</dbReference>